<proteinExistence type="evidence at protein level"/>
<comment type="function">
    <text evidence="1">Antitoxin component of a type II toxin-antitoxin (TA) system. Probably neutralizes the toxic activity of cognate toxin RelE (By similarity).</text>
</comment>
<comment type="subunit">
    <text evidence="2">Forms heterodimers with RelE and possibly a heterotetramer RelE3-RelB3(2)-RelE3 from 2 heterodimers. The heterotetramer is probably not very stable in solution.</text>
</comment>
<feature type="chain" id="PRO_0000406203" description="Antitoxin RelB3">
    <location>
        <begin position="1"/>
        <end position="53"/>
    </location>
</feature>
<feature type="helix" evidence="3">
    <location>
        <begin position="14"/>
        <end position="33"/>
    </location>
</feature>
<feature type="turn" evidence="3">
    <location>
        <begin position="34"/>
        <end position="37"/>
    </location>
</feature>
<feature type="helix" evidence="3">
    <location>
        <begin position="43"/>
        <end position="47"/>
    </location>
</feature>
<dbReference type="EMBL" id="L77117">
    <property type="status" value="NOT_ANNOTATED_CDS"/>
    <property type="molecule type" value="Genomic_DNA"/>
</dbReference>
<dbReference type="RefSeq" id="WP_162484755.1">
    <property type="nucleotide sequence ID" value="NC_000909.1"/>
</dbReference>
<dbReference type="PDB" id="3BPQ">
    <property type="method" value="X-ray"/>
    <property type="resolution" value="2.20 A"/>
    <property type="chains" value="A/C=1-52"/>
</dbReference>
<dbReference type="PDBsum" id="3BPQ"/>
<dbReference type="SMR" id="P0CL56"/>
<dbReference type="GeneID" id="43875345"/>
<dbReference type="InParanoid" id="P0CL56"/>
<dbReference type="OrthoDB" id="379659at2157"/>
<dbReference type="EvolutionaryTrace" id="P0CL56"/>
<dbReference type="Proteomes" id="UP000000805">
    <property type="component" value="Chromosome"/>
</dbReference>
<dbReference type="Gene3D" id="6.10.250.2100">
    <property type="match status" value="1"/>
</dbReference>
<dbReference type="InterPro" id="IPR049537">
    <property type="entry name" value="RelB-like"/>
</dbReference>
<dbReference type="Pfam" id="PF18506">
    <property type="entry name" value="RelB-like"/>
    <property type="match status" value="1"/>
</dbReference>
<name>RELB3_METJA</name>
<gene>
    <name type="primary">relB3</name>
    <name type="synonym">relB</name>
    <name type="ordered locus">MJ1103.1</name>
</gene>
<keyword id="KW-0002">3D-structure</keyword>
<keyword id="KW-1185">Reference proteome</keyword>
<keyword id="KW-1277">Toxin-antitoxin system</keyword>
<protein>
    <recommendedName>
        <fullName>Antitoxin RelB3</fullName>
    </recommendedName>
</protein>
<evidence type="ECO:0000250" key="1"/>
<evidence type="ECO:0000269" key="2">
    <source>
    </source>
</evidence>
<evidence type="ECO:0007829" key="3">
    <source>
        <dbReference type="PDB" id="3BPQ"/>
    </source>
</evidence>
<reference key="1">
    <citation type="journal article" date="1996" name="Science">
        <title>Complete genome sequence of the methanogenic archaeon, Methanococcus jannaschii.</title>
        <authorList>
            <person name="Bult C.J."/>
            <person name="White O."/>
            <person name="Olsen G.J."/>
            <person name="Zhou L."/>
            <person name="Fleischmann R.D."/>
            <person name="Sutton G.G."/>
            <person name="Blake J.A."/>
            <person name="FitzGerald L.M."/>
            <person name="Clayton R.A."/>
            <person name="Gocayne J.D."/>
            <person name="Kerlavage A.R."/>
            <person name="Dougherty B.A."/>
            <person name="Tomb J.-F."/>
            <person name="Adams M.D."/>
            <person name="Reich C.I."/>
            <person name="Overbeek R."/>
            <person name="Kirkness E.F."/>
            <person name="Weinstock K.G."/>
            <person name="Merrick J.M."/>
            <person name="Glodek A."/>
            <person name="Scott J.L."/>
            <person name="Geoghagen N.S.M."/>
            <person name="Weidman J.F."/>
            <person name="Fuhrmann J.L."/>
            <person name="Nguyen D."/>
            <person name="Utterback T.R."/>
            <person name="Kelley J.M."/>
            <person name="Peterson J.D."/>
            <person name="Sadow P.W."/>
            <person name="Hanna M.C."/>
            <person name="Cotton M.D."/>
            <person name="Roberts K.M."/>
            <person name="Hurst M.A."/>
            <person name="Kaine B.P."/>
            <person name="Borodovsky M."/>
            <person name="Klenk H.-P."/>
            <person name="Fraser C.M."/>
            <person name="Smith H.O."/>
            <person name="Woese C.R."/>
            <person name="Venter J.C."/>
        </authorList>
    </citation>
    <scope>NUCLEOTIDE SEQUENCE [LARGE SCALE GENOMIC DNA]</scope>
    <source>
        <strain>ATCC 43067 / DSM 2661 / JAL-1 / JCM 10045 / NBRC 100440</strain>
    </source>
</reference>
<reference key="2">
    <citation type="journal article" date="2005" name="Nucleic Acids Res.">
        <title>Toxin-antitoxin loci are highly abundant in free-living but lost from host-associated prokaryotes.</title>
        <authorList>
            <person name="Pandey D.P."/>
            <person name="Gerdes K."/>
        </authorList>
    </citation>
    <scope>IDENTIFICATION</scope>
    <scope>POSSIBLE FUNCTION</scope>
    <source>
        <strain>ATCC 43067 / DSM 2661 / JAL-1 / JCM 10045 / NBRC 100440</strain>
    </source>
</reference>
<reference key="3">
    <citation type="journal article" date="2009" name="J. Mol. Biol.">
        <title>Crystal structure of the antitoxin-toxin protein complex RelB-RelE from Methanococcus jannaschii.</title>
        <authorList>
            <person name="Francuski D."/>
            <person name="Saenger W."/>
        </authorList>
    </citation>
    <scope>X-RAY CRYSTALLOGRAPHY (2.2 ANGSTROMS) OF 1-52</scope>
    <scope>SUBUNIT</scope>
    <source>
        <strain>ATCC 43067 / DSM 2661 / JAL-1 / JCM 10045 / NBRC 100440</strain>
    </source>
</reference>
<sequence length="53" mass="6440">MRLKKRFKKFFISRKEYEKIEEILDIGLAKAMEETKDDELLTYDEIKELLGDK</sequence>
<organism>
    <name type="scientific">Methanocaldococcus jannaschii (strain ATCC 43067 / DSM 2661 / JAL-1 / JCM 10045 / NBRC 100440)</name>
    <name type="common">Methanococcus jannaschii</name>
    <dbReference type="NCBI Taxonomy" id="243232"/>
    <lineage>
        <taxon>Archaea</taxon>
        <taxon>Methanobacteriati</taxon>
        <taxon>Methanobacteriota</taxon>
        <taxon>Methanomada group</taxon>
        <taxon>Methanococci</taxon>
        <taxon>Methanococcales</taxon>
        <taxon>Methanocaldococcaceae</taxon>
        <taxon>Methanocaldococcus</taxon>
    </lineage>
</organism>
<accession>P0CL56</accession>